<reference key="1">
    <citation type="journal article" date="1998" name="Nature">
        <title>Deciphering the biology of Mycobacterium tuberculosis from the complete genome sequence.</title>
        <authorList>
            <person name="Cole S.T."/>
            <person name="Brosch R."/>
            <person name="Parkhill J."/>
            <person name="Garnier T."/>
            <person name="Churcher C.M."/>
            <person name="Harris D.E."/>
            <person name="Gordon S.V."/>
            <person name="Eiglmeier K."/>
            <person name="Gas S."/>
            <person name="Barry C.E. III"/>
            <person name="Tekaia F."/>
            <person name="Badcock K."/>
            <person name="Basham D."/>
            <person name="Brown D."/>
            <person name="Chillingworth T."/>
            <person name="Connor R."/>
            <person name="Davies R.M."/>
            <person name="Devlin K."/>
            <person name="Feltwell T."/>
            <person name="Gentles S."/>
            <person name="Hamlin N."/>
            <person name="Holroyd S."/>
            <person name="Hornsby T."/>
            <person name="Jagels K."/>
            <person name="Krogh A."/>
            <person name="McLean J."/>
            <person name="Moule S."/>
            <person name="Murphy L.D."/>
            <person name="Oliver S."/>
            <person name="Osborne J."/>
            <person name="Quail M.A."/>
            <person name="Rajandream M.A."/>
            <person name="Rogers J."/>
            <person name="Rutter S."/>
            <person name="Seeger K."/>
            <person name="Skelton S."/>
            <person name="Squares S."/>
            <person name="Squares R."/>
            <person name="Sulston J.E."/>
            <person name="Taylor K."/>
            <person name="Whitehead S."/>
            <person name="Barrell B.G."/>
        </authorList>
    </citation>
    <scope>NUCLEOTIDE SEQUENCE [LARGE SCALE GENOMIC DNA]</scope>
    <source>
        <strain>ATCC 25618 / H37Rv</strain>
    </source>
</reference>
<reference key="2">
    <citation type="journal article" date="2008" name="Acta Crystallogr. F">
        <title>Cloning, expression, purification, crystallization and preliminary X-ray crystallographic analysis of bacterioferritin A from Mycobacterium tuberculosis.</title>
        <authorList>
            <person name="Gupta V."/>
            <person name="Gupta R.K."/>
            <person name="Khare G."/>
            <person name="Salunke D.M."/>
            <person name="Tyagi A.K."/>
        </authorList>
    </citation>
    <scope>CRYSTALLIZATION</scope>
    <scope>HEME-BINDING</scope>
    <source>
        <strain>ATCC 25618 / H37Rv</strain>
    </source>
</reference>
<reference key="3">
    <citation type="journal article" date="2011" name="Mol. Cell. Proteomics">
        <title>Proteogenomic analysis of Mycobacterium tuberculosis by high resolution mass spectrometry.</title>
        <authorList>
            <person name="Kelkar D.S."/>
            <person name="Kumar D."/>
            <person name="Kumar P."/>
            <person name="Balakrishnan L."/>
            <person name="Muthusamy B."/>
            <person name="Yadav A.K."/>
            <person name="Shrivastava P."/>
            <person name="Marimuthu A."/>
            <person name="Anand S."/>
            <person name="Sundaram H."/>
            <person name="Kingsbury R."/>
            <person name="Harsha H.C."/>
            <person name="Nair B."/>
            <person name="Prasad T.S."/>
            <person name="Chauhan D.S."/>
            <person name="Katoch K."/>
            <person name="Katoch V.M."/>
            <person name="Kumar P."/>
            <person name="Chaerkady R."/>
            <person name="Ramachandran S."/>
            <person name="Dash D."/>
            <person name="Pandey A."/>
        </authorList>
    </citation>
    <scope>IDENTIFICATION BY MASS SPECTROMETRY [LARGE SCALE ANALYSIS]</scope>
    <source>
        <strain>ATCC 25618 / H37Rv</strain>
    </source>
</reference>
<reference key="4">
    <citation type="journal article" date="2012" name="J. Bacteriol.">
        <title>Iron storage proteins are essential for the survival and pathogenesis of Mycobacterium tuberculosis in THP-1 macrophages and the guinea pig model of infection.</title>
        <authorList>
            <person name="Reddy P.V."/>
            <person name="Puri R.V."/>
            <person name="Khera A."/>
            <person name="Tyagi A.K."/>
        </authorList>
    </citation>
    <scope>DISRUPTION PHENOTYPE</scope>
    <source>
        <strain>H37Rv</strain>
    </source>
</reference>
<reference key="5">
    <citation type="journal article" date="2014" name="J. Biol. Chem.">
        <title>Characterization of a Mycobacterium tuberculosis nanocompartment and its potential cargo proteins.</title>
        <authorList>
            <person name="Contreras H."/>
            <person name="Joens M.S."/>
            <person name="McMath L.M."/>
            <person name="Le V.P."/>
            <person name="Tullius M.V."/>
            <person name="Kimmey J.M."/>
            <person name="Bionghi N."/>
            <person name="Horwitz M.A."/>
            <person name="Fitzpatrick J.A."/>
            <person name="Goulding C.W."/>
        </authorList>
    </citation>
    <scope>NOT FOUND IN ENCAPSULIN NANOCOMPARTMENTS</scope>
    <source>
        <strain>H37Rv</strain>
    </source>
</reference>
<reference key="6">
    <citation type="journal article" date="2009" name="PLoS ONE">
        <title>Crystal structure of Bfr A from Mycobacterium tuberculosis: incorporation of selenomethionine results in cleavage and demetallation of haem.</title>
        <authorList>
            <person name="Gupta V."/>
            <person name="Gupta R.K."/>
            <person name="Khare G."/>
            <person name="Salunke D.M."/>
            <person name="Tyagi A.K."/>
        </authorList>
    </citation>
    <scope>X-RAY CRYSTALLOGRAPHY (2.59 ANGSTROMS) IN COMPLEX WITH IRON IONS AND A DEGRADED PORPHYRIN DERIVATIVE</scope>
    <scope>SUBUNIT</scope>
    <source>
        <strain>ATCC 25618 / H37Rv</strain>
    </source>
</reference>
<name>BFR_MYCTU</name>
<organism>
    <name type="scientific">Mycobacterium tuberculosis (strain ATCC 25618 / H37Rv)</name>
    <dbReference type="NCBI Taxonomy" id="83332"/>
    <lineage>
        <taxon>Bacteria</taxon>
        <taxon>Bacillati</taxon>
        <taxon>Actinomycetota</taxon>
        <taxon>Actinomycetes</taxon>
        <taxon>Mycobacteriales</taxon>
        <taxon>Mycobacteriaceae</taxon>
        <taxon>Mycobacterium</taxon>
        <taxon>Mycobacterium tuberculosis complex</taxon>
    </lineage>
</organism>
<evidence type="ECO:0000250" key="1"/>
<evidence type="ECO:0000250" key="2">
    <source>
        <dbReference type="UniProtKB" id="Q9HWF9"/>
    </source>
</evidence>
<evidence type="ECO:0000255" key="3">
    <source>
        <dbReference type="PROSITE-ProRule" id="PRU00085"/>
    </source>
</evidence>
<evidence type="ECO:0000269" key="4">
    <source>
    </source>
</evidence>
<evidence type="ECO:0000269" key="5">
    <source>
    </source>
</evidence>
<evidence type="ECO:0000269" key="6">
    <source>
    </source>
</evidence>
<evidence type="ECO:0000303" key="7">
    <source>
    </source>
</evidence>
<evidence type="ECO:0000305" key="8"/>
<evidence type="ECO:0000305" key="9">
    <source>
    </source>
</evidence>
<evidence type="ECO:0007829" key="10">
    <source>
        <dbReference type="PDB" id="3UOI"/>
    </source>
</evidence>
<feature type="chain" id="PRO_0000192600" description="Bacterioferritin BfrA">
    <location>
        <begin position="1"/>
        <end position="159"/>
    </location>
</feature>
<feature type="domain" description="Ferritin-like diiron" evidence="3">
    <location>
        <begin position="1"/>
        <end position="145"/>
    </location>
</feature>
<feature type="binding site">
    <location>
        <position position="18"/>
    </location>
    <ligand>
        <name>Fe cation</name>
        <dbReference type="ChEBI" id="CHEBI:24875"/>
        <label>1</label>
    </ligand>
</feature>
<feature type="binding site">
    <location>
        <position position="51"/>
    </location>
    <ligand>
        <name>Fe cation</name>
        <dbReference type="ChEBI" id="CHEBI:24875"/>
        <label>1</label>
    </ligand>
</feature>
<feature type="binding site">
    <location>
        <position position="51"/>
    </location>
    <ligand>
        <name>Fe cation</name>
        <dbReference type="ChEBI" id="CHEBI:24875"/>
        <label>2</label>
    </ligand>
</feature>
<feature type="binding site" description="axial binding residue" evidence="3">
    <location>
        <position position="52"/>
    </location>
    <ligand>
        <name>heme b</name>
        <dbReference type="ChEBI" id="CHEBI:60344"/>
        <note>ligand shared between dimeric partners</note>
    </ligand>
    <ligandPart>
        <name>Fe</name>
        <dbReference type="ChEBI" id="CHEBI:18248"/>
    </ligandPart>
</feature>
<feature type="binding site">
    <location>
        <position position="54"/>
    </location>
    <ligand>
        <name>Fe cation</name>
        <dbReference type="ChEBI" id="CHEBI:24875"/>
        <label>1</label>
    </ligand>
</feature>
<feature type="binding site">
    <location>
        <position position="94"/>
    </location>
    <ligand>
        <name>Fe cation</name>
        <dbReference type="ChEBI" id="CHEBI:24875"/>
        <label>2</label>
    </ligand>
</feature>
<feature type="binding site">
    <location>
        <position position="127"/>
    </location>
    <ligand>
        <name>Fe cation</name>
        <dbReference type="ChEBI" id="CHEBI:24875"/>
        <label>1</label>
    </ligand>
</feature>
<feature type="binding site">
    <location>
        <position position="127"/>
    </location>
    <ligand>
        <name>Fe cation</name>
        <dbReference type="ChEBI" id="CHEBI:24875"/>
        <label>2</label>
    </ligand>
</feature>
<feature type="binding site">
    <location>
        <position position="130"/>
    </location>
    <ligand>
        <name>Fe cation</name>
        <dbReference type="ChEBI" id="CHEBI:24875"/>
        <label>2</label>
    </ligand>
</feature>
<feature type="helix" evidence="10">
    <location>
        <begin position="5"/>
        <end position="34"/>
    </location>
</feature>
<feature type="helix" evidence="10">
    <location>
        <begin position="38"/>
        <end position="64"/>
    </location>
</feature>
<feature type="helix" evidence="10">
    <location>
        <begin position="83"/>
        <end position="110"/>
    </location>
</feature>
<feature type="helix" evidence="10">
    <location>
        <begin position="114"/>
        <end position="144"/>
    </location>
</feature>
<feature type="helix" evidence="10">
    <location>
        <begin position="146"/>
        <end position="151"/>
    </location>
</feature>
<sequence length="159" mass="18341">MQGDPDVLRLLNEQLTSELTAINQYFLHSKMQDNWGFTELAAHTRAESFDEMRHAEEITDRILLLDGLPNYQRIGSLRIGQTLREQFEADLAIEYDVLNRLKPGIVMCREKQDTTSAVLLEKIVADEEEHIDYLETQLELMDKLGEELYSAQCVSRPPT</sequence>
<dbReference type="EC" id="1.16.3.1"/>
<dbReference type="EMBL" id="AL123456">
    <property type="protein sequence ID" value="CCP44642.1"/>
    <property type="molecule type" value="Genomic_DNA"/>
</dbReference>
<dbReference type="PIR" id="A70515">
    <property type="entry name" value="A70515"/>
</dbReference>
<dbReference type="RefSeq" id="NP_216392.1">
    <property type="nucleotide sequence ID" value="NC_000962.3"/>
</dbReference>
<dbReference type="RefSeq" id="WP_003409398.1">
    <property type="nucleotide sequence ID" value="NZ_NVQJ01000013.1"/>
</dbReference>
<dbReference type="PDB" id="2WTL">
    <property type="method" value="X-ray"/>
    <property type="resolution" value="2.59 A"/>
    <property type="chains" value="A/B/C/D/E/F=1-159"/>
</dbReference>
<dbReference type="PDB" id="3QB9">
    <property type="method" value="X-ray"/>
    <property type="resolution" value="2.11 A"/>
    <property type="chains" value="A/B/C/D/E/F=1-159"/>
</dbReference>
<dbReference type="PDB" id="3UOF">
    <property type="method" value="X-ray"/>
    <property type="resolution" value="2.90 A"/>
    <property type="chains" value="A/B/C/D/E/F=1-159"/>
</dbReference>
<dbReference type="PDB" id="3UOI">
    <property type="method" value="X-ray"/>
    <property type="resolution" value="1.90 A"/>
    <property type="chains" value="A/B/C/D/E/F/G/H/I/J/K/L/M/N/O/P/Q/R/S/T/U/V/W/X/a/b/c/d/e/f/g/h/i/j/k/l/m/n/o/p/q/r/s/t/u/v/w/x=1-159"/>
</dbReference>
<dbReference type="PDBsum" id="2WTL"/>
<dbReference type="PDBsum" id="3QB9"/>
<dbReference type="PDBsum" id="3UOF"/>
<dbReference type="PDBsum" id="3UOI"/>
<dbReference type="SMR" id="P9WPQ9"/>
<dbReference type="FunCoup" id="P9WPQ9">
    <property type="interactions" value="2"/>
</dbReference>
<dbReference type="STRING" id="83332.Rv1876"/>
<dbReference type="PaxDb" id="83332-Rv1876"/>
<dbReference type="GeneID" id="45425849"/>
<dbReference type="GeneID" id="885767"/>
<dbReference type="KEGG" id="mtu:Rv1876"/>
<dbReference type="KEGG" id="mtv:RVBD_1876"/>
<dbReference type="TubercuList" id="Rv1876"/>
<dbReference type="eggNOG" id="COG2193">
    <property type="taxonomic scope" value="Bacteria"/>
</dbReference>
<dbReference type="InParanoid" id="P9WPQ9"/>
<dbReference type="OrthoDB" id="9800505at2"/>
<dbReference type="PhylomeDB" id="P9WPQ9"/>
<dbReference type="Reactome" id="R-HSA-1222449">
    <property type="pathway name" value="Mtb iron assimilation by chelation"/>
</dbReference>
<dbReference type="EvolutionaryTrace" id="P9WPQ9"/>
<dbReference type="Proteomes" id="UP000001584">
    <property type="component" value="Chromosome"/>
</dbReference>
<dbReference type="GO" id="GO:0005829">
    <property type="term" value="C:cytosol"/>
    <property type="evidence" value="ECO:0000318"/>
    <property type="project" value="GO_Central"/>
</dbReference>
<dbReference type="GO" id="GO:0005576">
    <property type="term" value="C:extracellular region"/>
    <property type="evidence" value="ECO:0007005"/>
    <property type="project" value="MTBBASE"/>
</dbReference>
<dbReference type="GO" id="GO:0005886">
    <property type="term" value="C:plasma membrane"/>
    <property type="evidence" value="ECO:0007005"/>
    <property type="project" value="MTBBASE"/>
</dbReference>
<dbReference type="GO" id="GO:0008199">
    <property type="term" value="F:ferric iron binding"/>
    <property type="evidence" value="ECO:0007669"/>
    <property type="project" value="InterPro"/>
</dbReference>
<dbReference type="GO" id="GO:0004322">
    <property type="term" value="F:ferroxidase activity"/>
    <property type="evidence" value="ECO:0000318"/>
    <property type="project" value="GO_Central"/>
</dbReference>
<dbReference type="GO" id="GO:0020037">
    <property type="term" value="F:heme binding"/>
    <property type="evidence" value="ECO:0000318"/>
    <property type="project" value="GO_Central"/>
</dbReference>
<dbReference type="GO" id="GO:0005506">
    <property type="term" value="F:iron ion binding"/>
    <property type="evidence" value="ECO:0000318"/>
    <property type="project" value="GO_Central"/>
</dbReference>
<dbReference type="GO" id="GO:0006879">
    <property type="term" value="P:intracellular iron ion homeostasis"/>
    <property type="evidence" value="ECO:0007669"/>
    <property type="project" value="UniProtKB-KW"/>
</dbReference>
<dbReference type="GO" id="GO:0006826">
    <property type="term" value="P:iron ion transport"/>
    <property type="evidence" value="ECO:0007669"/>
    <property type="project" value="InterPro"/>
</dbReference>
<dbReference type="GO" id="GO:0010039">
    <property type="term" value="P:response to iron ion"/>
    <property type="evidence" value="ECO:0000270"/>
    <property type="project" value="MTBBASE"/>
</dbReference>
<dbReference type="CDD" id="cd00907">
    <property type="entry name" value="Bacterioferritin"/>
    <property type="match status" value="1"/>
</dbReference>
<dbReference type="FunFam" id="1.20.1260.10:FF:000005">
    <property type="entry name" value="Bacterioferritin"/>
    <property type="match status" value="1"/>
</dbReference>
<dbReference type="Gene3D" id="1.20.1260.10">
    <property type="match status" value="1"/>
</dbReference>
<dbReference type="InterPro" id="IPR002024">
    <property type="entry name" value="Bacterioferritin"/>
</dbReference>
<dbReference type="InterPro" id="IPR012347">
    <property type="entry name" value="Ferritin-like"/>
</dbReference>
<dbReference type="InterPro" id="IPR009040">
    <property type="entry name" value="Ferritin-like_diiron"/>
</dbReference>
<dbReference type="InterPro" id="IPR009078">
    <property type="entry name" value="Ferritin-like_SF"/>
</dbReference>
<dbReference type="InterPro" id="IPR008331">
    <property type="entry name" value="Ferritin_DPS_dom"/>
</dbReference>
<dbReference type="NCBIfam" id="TIGR00754">
    <property type="entry name" value="bfr"/>
    <property type="match status" value="1"/>
</dbReference>
<dbReference type="PANTHER" id="PTHR30295">
    <property type="entry name" value="BACTERIOFERRITIN"/>
    <property type="match status" value="1"/>
</dbReference>
<dbReference type="PANTHER" id="PTHR30295:SF0">
    <property type="entry name" value="BACTERIOFERRITIN"/>
    <property type="match status" value="1"/>
</dbReference>
<dbReference type="Pfam" id="PF00210">
    <property type="entry name" value="Ferritin"/>
    <property type="match status" value="1"/>
</dbReference>
<dbReference type="PIRSF" id="PIRSF002560">
    <property type="entry name" value="Bacterioferritin"/>
    <property type="match status" value="1"/>
</dbReference>
<dbReference type="PRINTS" id="PR00601">
    <property type="entry name" value="BACFERRITIN"/>
</dbReference>
<dbReference type="SUPFAM" id="SSF47240">
    <property type="entry name" value="Ferritin-like"/>
    <property type="match status" value="1"/>
</dbReference>
<dbReference type="PROSITE" id="PS00549">
    <property type="entry name" value="BACTERIOFERRITIN"/>
    <property type="match status" value="1"/>
</dbReference>
<dbReference type="PROSITE" id="PS50905">
    <property type="entry name" value="FERRITIN_LIKE"/>
    <property type="match status" value="1"/>
</dbReference>
<keyword id="KW-0002">3D-structure</keyword>
<keyword id="KW-0963">Cytoplasm</keyword>
<keyword id="KW-0349">Heme</keyword>
<keyword id="KW-0408">Iron</keyword>
<keyword id="KW-0409">Iron storage</keyword>
<keyword id="KW-0479">Metal-binding</keyword>
<keyword id="KW-0560">Oxidoreductase</keyword>
<keyword id="KW-1185">Reference proteome</keyword>
<keyword id="KW-0843">Virulence</keyword>
<protein>
    <recommendedName>
        <fullName evidence="7">Bacterioferritin BfrA</fullName>
        <shortName>Bfr</shortName>
        <ecNumber>1.16.3.1</ecNumber>
    </recommendedName>
</protein>
<comment type="function">
    <text evidence="1">Iron-storage protein, whose ferroxidase center binds Fe(2+), oxidizes it using dioxygen to Fe(3+), and participates in the subsequent Fe(3+) oxide mineral core formation within the central cavity of the BFR protein shell.</text>
</comment>
<comment type="catalytic activity">
    <reaction>
        <text>4 Fe(2+) + O2 + 4 H(+) = 4 Fe(3+) + 2 H2O</text>
        <dbReference type="Rhea" id="RHEA:11148"/>
        <dbReference type="ChEBI" id="CHEBI:15377"/>
        <dbReference type="ChEBI" id="CHEBI:15378"/>
        <dbReference type="ChEBI" id="CHEBI:15379"/>
        <dbReference type="ChEBI" id="CHEBI:29033"/>
        <dbReference type="ChEBI" id="CHEBI:29034"/>
        <dbReference type="EC" id="1.16.3.1"/>
    </reaction>
</comment>
<comment type="catalytic activity">
    <reaction evidence="2">
        <text>Fe(2+)(in) = Fe(2+)(out)</text>
        <dbReference type="Rhea" id="RHEA:28486"/>
        <dbReference type="ChEBI" id="CHEBI:29033"/>
    </reaction>
</comment>
<comment type="cofactor">
    <cofactor>
        <name>heme b</name>
        <dbReference type="ChEBI" id="CHEBI:60344"/>
    </cofactor>
    <text>Binds 1 heme b (iron(II)-protoporphyrin IX) group per dimer.</text>
</comment>
<comment type="subunit">
    <text evidence="4">Homooligomer of 24 subunits, arranged as 12 dimers, that are packed together to form an approximately spherical molecule with a central cavity, in which large amounts of iron can be deposited.</text>
</comment>
<comment type="subcellular location">
    <subcellularLocation>
        <location evidence="9">Cytoplasm</location>
    </subcellularLocation>
    <text evidence="6">Unlike its homolog BfrB, is not found in encapsulin nanocompartments.</text>
</comment>
<comment type="disruption phenotype">
    <text evidence="5">A single deletion is slightly more sensitive to oxidative stress (cumene hydroperoxide and plumbagin). A double bfrA-bfrB mutant grows 40% less well in the presence of an iron chelator, is more sensitive to oxidative stress, has significantly reduced pathological effects in guinea pigs and a marked reduction in its survival in human macrophages.</text>
</comment>
<comment type="similarity">
    <text evidence="8">Belongs to the ferritin-like superfamily. Bacterioferritin family.</text>
</comment>
<accession>P9WPQ9</accession>
<accession>L0T7Y6</accession>
<accession>O08465</accession>
<accession>P63697</accession>
<gene>
    <name type="primary">bfr</name>
    <name type="synonym">bfrA</name>
    <name type="ordered locus">Rv1876</name>
    <name type="ORF">MTCY180.42c</name>
</gene>
<proteinExistence type="evidence at protein level"/>